<name>RS14_BAUCH</name>
<gene>
    <name evidence="1" type="primary">rpsN</name>
    <name type="ordered locus">BCI_0341</name>
</gene>
<dbReference type="EMBL" id="CP000238">
    <property type="protein sequence ID" value="ABF13779.1"/>
    <property type="molecule type" value="Genomic_DNA"/>
</dbReference>
<dbReference type="RefSeq" id="WP_011520522.1">
    <property type="nucleotide sequence ID" value="NC_007984.1"/>
</dbReference>
<dbReference type="SMR" id="Q1LTC5"/>
<dbReference type="STRING" id="374463.BCI_0341"/>
<dbReference type="KEGG" id="bci:BCI_0341"/>
<dbReference type="HOGENOM" id="CLU_139869_0_1_6"/>
<dbReference type="OrthoDB" id="9810484at2"/>
<dbReference type="Proteomes" id="UP000002427">
    <property type="component" value="Chromosome"/>
</dbReference>
<dbReference type="GO" id="GO:0005737">
    <property type="term" value="C:cytoplasm"/>
    <property type="evidence" value="ECO:0007669"/>
    <property type="project" value="UniProtKB-ARBA"/>
</dbReference>
<dbReference type="GO" id="GO:0015935">
    <property type="term" value="C:small ribosomal subunit"/>
    <property type="evidence" value="ECO:0007669"/>
    <property type="project" value="TreeGrafter"/>
</dbReference>
<dbReference type="GO" id="GO:0019843">
    <property type="term" value="F:rRNA binding"/>
    <property type="evidence" value="ECO:0007669"/>
    <property type="project" value="UniProtKB-UniRule"/>
</dbReference>
<dbReference type="GO" id="GO:0003735">
    <property type="term" value="F:structural constituent of ribosome"/>
    <property type="evidence" value="ECO:0007669"/>
    <property type="project" value="InterPro"/>
</dbReference>
<dbReference type="GO" id="GO:0006412">
    <property type="term" value="P:translation"/>
    <property type="evidence" value="ECO:0007669"/>
    <property type="project" value="UniProtKB-UniRule"/>
</dbReference>
<dbReference type="FunFam" id="1.10.287.1480:FF:000001">
    <property type="entry name" value="30S ribosomal protein S14"/>
    <property type="match status" value="1"/>
</dbReference>
<dbReference type="Gene3D" id="1.10.287.1480">
    <property type="match status" value="1"/>
</dbReference>
<dbReference type="HAMAP" id="MF_00537">
    <property type="entry name" value="Ribosomal_uS14_1"/>
    <property type="match status" value="1"/>
</dbReference>
<dbReference type="InterPro" id="IPR001209">
    <property type="entry name" value="Ribosomal_uS14"/>
</dbReference>
<dbReference type="InterPro" id="IPR023036">
    <property type="entry name" value="Ribosomal_uS14_bac/plastid"/>
</dbReference>
<dbReference type="InterPro" id="IPR018271">
    <property type="entry name" value="Ribosomal_uS14_CS"/>
</dbReference>
<dbReference type="NCBIfam" id="NF006477">
    <property type="entry name" value="PRK08881.1"/>
    <property type="match status" value="1"/>
</dbReference>
<dbReference type="PANTHER" id="PTHR19836">
    <property type="entry name" value="30S RIBOSOMAL PROTEIN S14"/>
    <property type="match status" value="1"/>
</dbReference>
<dbReference type="PANTHER" id="PTHR19836:SF19">
    <property type="entry name" value="SMALL RIBOSOMAL SUBUNIT PROTEIN US14M"/>
    <property type="match status" value="1"/>
</dbReference>
<dbReference type="Pfam" id="PF00253">
    <property type="entry name" value="Ribosomal_S14"/>
    <property type="match status" value="1"/>
</dbReference>
<dbReference type="SUPFAM" id="SSF57716">
    <property type="entry name" value="Glucocorticoid receptor-like (DNA-binding domain)"/>
    <property type="match status" value="1"/>
</dbReference>
<dbReference type="PROSITE" id="PS00527">
    <property type="entry name" value="RIBOSOMAL_S14"/>
    <property type="match status" value="1"/>
</dbReference>
<organism>
    <name type="scientific">Baumannia cicadellinicola subsp. Homalodisca coagulata</name>
    <dbReference type="NCBI Taxonomy" id="374463"/>
    <lineage>
        <taxon>Bacteria</taxon>
        <taxon>Pseudomonadati</taxon>
        <taxon>Pseudomonadota</taxon>
        <taxon>Gammaproteobacteria</taxon>
        <taxon>Candidatus Palibaumannia</taxon>
    </lineage>
</organism>
<proteinExistence type="inferred from homology"/>
<evidence type="ECO:0000255" key="1">
    <source>
        <dbReference type="HAMAP-Rule" id="MF_00537"/>
    </source>
</evidence>
<evidence type="ECO:0000305" key="2"/>
<reference key="1">
    <citation type="journal article" date="2006" name="PLoS Biol.">
        <title>Metabolic complementarity and genomics of the dual bacterial symbiosis of sharpshooters.</title>
        <authorList>
            <person name="Wu D."/>
            <person name="Daugherty S.C."/>
            <person name="Van Aken S.E."/>
            <person name="Pai G.H."/>
            <person name="Watkins K.L."/>
            <person name="Khouri H."/>
            <person name="Tallon L.J."/>
            <person name="Zaborsky J.M."/>
            <person name="Dunbar H.E."/>
            <person name="Tran P.L."/>
            <person name="Moran N.A."/>
            <person name="Eisen J.A."/>
        </authorList>
    </citation>
    <scope>NUCLEOTIDE SEQUENCE [LARGE SCALE GENOMIC DNA]</scope>
</reference>
<feature type="chain" id="PRO_0000269043" description="Small ribosomal subunit protein uS14">
    <location>
        <begin position="1"/>
        <end position="101"/>
    </location>
</feature>
<sequence length="101" mass="11931">MTKQSIRAREFKRIILAKKFFAKRIKLKQIISNIHSSSEERWNAIIKLQQLPRDSSRSRQRNRCSQTGRPHAFLRKFGLSRIKVREAAMRGEIPGLRKASW</sequence>
<keyword id="KW-1185">Reference proteome</keyword>
<keyword id="KW-0687">Ribonucleoprotein</keyword>
<keyword id="KW-0689">Ribosomal protein</keyword>
<keyword id="KW-0694">RNA-binding</keyword>
<keyword id="KW-0699">rRNA-binding</keyword>
<accession>Q1LTC5</accession>
<protein>
    <recommendedName>
        <fullName evidence="1">Small ribosomal subunit protein uS14</fullName>
    </recommendedName>
    <alternativeName>
        <fullName evidence="2">30S ribosomal protein S14</fullName>
    </alternativeName>
</protein>
<comment type="function">
    <text evidence="1">Binds 16S rRNA, required for the assembly of 30S particles and may also be responsible for determining the conformation of the 16S rRNA at the A site.</text>
</comment>
<comment type="subunit">
    <text evidence="1">Part of the 30S ribosomal subunit. Contacts proteins S3 and S10.</text>
</comment>
<comment type="similarity">
    <text evidence="1">Belongs to the universal ribosomal protein uS14 family.</text>
</comment>